<dbReference type="EMBL" id="CP001472">
    <property type="protein sequence ID" value="ACO33261.1"/>
    <property type="molecule type" value="Genomic_DNA"/>
</dbReference>
<dbReference type="RefSeq" id="WP_015896572.1">
    <property type="nucleotide sequence ID" value="NC_012483.1"/>
</dbReference>
<dbReference type="SMR" id="C1F630"/>
<dbReference type="FunCoup" id="C1F630">
    <property type="interactions" value="605"/>
</dbReference>
<dbReference type="STRING" id="240015.ACP_1439"/>
<dbReference type="KEGG" id="aca:ACP_1439"/>
<dbReference type="eggNOG" id="COG0094">
    <property type="taxonomic scope" value="Bacteria"/>
</dbReference>
<dbReference type="HOGENOM" id="CLU_061015_2_1_0"/>
<dbReference type="InParanoid" id="C1F630"/>
<dbReference type="OrthoDB" id="9806626at2"/>
<dbReference type="Proteomes" id="UP000002207">
    <property type="component" value="Chromosome"/>
</dbReference>
<dbReference type="GO" id="GO:1990904">
    <property type="term" value="C:ribonucleoprotein complex"/>
    <property type="evidence" value="ECO:0007669"/>
    <property type="project" value="UniProtKB-KW"/>
</dbReference>
<dbReference type="GO" id="GO:0005840">
    <property type="term" value="C:ribosome"/>
    <property type="evidence" value="ECO:0007669"/>
    <property type="project" value="UniProtKB-KW"/>
</dbReference>
<dbReference type="GO" id="GO:0019843">
    <property type="term" value="F:rRNA binding"/>
    <property type="evidence" value="ECO:0007669"/>
    <property type="project" value="UniProtKB-UniRule"/>
</dbReference>
<dbReference type="GO" id="GO:0003735">
    <property type="term" value="F:structural constituent of ribosome"/>
    <property type="evidence" value="ECO:0007669"/>
    <property type="project" value="InterPro"/>
</dbReference>
<dbReference type="GO" id="GO:0000049">
    <property type="term" value="F:tRNA binding"/>
    <property type="evidence" value="ECO:0007669"/>
    <property type="project" value="UniProtKB-UniRule"/>
</dbReference>
<dbReference type="GO" id="GO:0006412">
    <property type="term" value="P:translation"/>
    <property type="evidence" value="ECO:0007669"/>
    <property type="project" value="UniProtKB-UniRule"/>
</dbReference>
<dbReference type="FunFam" id="3.30.1440.10:FF:000001">
    <property type="entry name" value="50S ribosomal protein L5"/>
    <property type="match status" value="1"/>
</dbReference>
<dbReference type="Gene3D" id="3.30.1440.10">
    <property type="match status" value="1"/>
</dbReference>
<dbReference type="HAMAP" id="MF_01333_B">
    <property type="entry name" value="Ribosomal_uL5_B"/>
    <property type="match status" value="1"/>
</dbReference>
<dbReference type="InterPro" id="IPR002132">
    <property type="entry name" value="Ribosomal_uL5"/>
</dbReference>
<dbReference type="InterPro" id="IPR020930">
    <property type="entry name" value="Ribosomal_uL5_bac-type"/>
</dbReference>
<dbReference type="InterPro" id="IPR031309">
    <property type="entry name" value="Ribosomal_uL5_C"/>
</dbReference>
<dbReference type="InterPro" id="IPR020929">
    <property type="entry name" value="Ribosomal_uL5_CS"/>
</dbReference>
<dbReference type="InterPro" id="IPR022803">
    <property type="entry name" value="Ribosomal_uL5_dom_sf"/>
</dbReference>
<dbReference type="InterPro" id="IPR031310">
    <property type="entry name" value="Ribosomal_uL5_N"/>
</dbReference>
<dbReference type="NCBIfam" id="NF000585">
    <property type="entry name" value="PRK00010.1"/>
    <property type="match status" value="1"/>
</dbReference>
<dbReference type="PANTHER" id="PTHR11994">
    <property type="entry name" value="60S RIBOSOMAL PROTEIN L11-RELATED"/>
    <property type="match status" value="1"/>
</dbReference>
<dbReference type="Pfam" id="PF00281">
    <property type="entry name" value="Ribosomal_L5"/>
    <property type="match status" value="1"/>
</dbReference>
<dbReference type="Pfam" id="PF00673">
    <property type="entry name" value="Ribosomal_L5_C"/>
    <property type="match status" value="1"/>
</dbReference>
<dbReference type="PIRSF" id="PIRSF002161">
    <property type="entry name" value="Ribosomal_L5"/>
    <property type="match status" value="1"/>
</dbReference>
<dbReference type="SUPFAM" id="SSF55282">
    <property type="entry name" value="RL5-like"/>
    <property type="match status" value="1"/>
</dbReference>
<dbReference type="PROSITE" id="PS00358">
    <property type="entry name" value="RIBOSOMAL_L5"/>
    <property type="match status" value="1"/>
</dbReference>
<accession>C1F630</accession>
<gene>
    <name evidence="1" type="primary">rplE</name>
    <name type="ordered locus">ACP_1439</name>
</gene>
<sequence>MAARLKEKFIKEIRPALQKELGLENTMAVPRIEKIVLNMGLGEATQNSKLLDPLVADLAAIAGQKPVTTRAKKSIAAFKVREGMPIGAMVTLRGDTMYEFLDRLISVGLPRVRDFRGVSTKSFDGRGNYTLGVRDQLIFPEIDISKVEKLKGMNITIVTTAQDDNSARALLKQFGVPFRQTA</sequence>
<feature type="chain" id="PRO_1000166100" description="Large ribosomal subunit protein uL5">
    <location>
        <begin position="1"/>
        <end position="182"/>
    </location>
</feature>
<keyword id="KW-1185">Reference proteome</keyword>
<keyword id="KW-0687">Ribonucleoprotein</keyword>
<keyword id="KW-0689">Ribosomal protein</keyword>
<keyword id="KW-0694">RNA-binding</keyword>
<keyword id="KW-0699">rRNA-binding</keyword>
<keyword id="KW-0820">tRNA-binding</keyword>
<evidence type="ECO:0000255" key="1">
    <source>
        <dbReference type="HAMAP-Rule" id="MF_01333"/>
    </source>
</evidence>
<evidence type="ECO:0000305" key="2"/>
<reference key="1">
    <citation type="journal article" date="2009" name="Appl. Environ. Microbiol.">
        <title>Three genomes from the phylum Acidobacteria provide insight into the lifestyles of these microorganisms in soils.</title>
        <authorList>
            <person name="Ward N.L."/>
            <person name="Challacombe J.F."/>
            <person name="Janssen P.H."/>
            <person name="Henrissat B."/>
            <person name="Coutinho P.M."/>
            <person name="Wu M."/>
            <person name="Xie G."/>
            <person name="Haft D.H."/>
            <person name="Sait M."/>
            <person name="Badger J."/>
            <person name="Barabote R.D."/>
            <person name="Bradley B."/>
            <person name="Brettin T.S."/>
            <person name="Brinkac L.M."/>
            <person name="Bruce D."/>
            <person name="Creasy T."/>
            <person name="Daugherty S.C."/>
            <person name="Davidsen T.M."/>
            <person name="DeBoy R.T."/>
            <person name="Detter J.C."/>
            <person name="Dodson R.J."/>
            <person name="Durkin A.S."/>
            <person name="Ganapathy A."/>
            <person name="Gwinn-Giglio M."/>
            <person name="Han C.S."/>
            <person name="Khouri H."/>
            <person name="Kiss H."/>
            <person name="Kothari S.P."/>
            <person name="Madupu R."/>
            <person name="Nelson K.E."/>
            <person name="Nelson W.C."/>
            <person name="Paulsen I."/>
            <person name="Penn K."/>
            <person name="Ren Q."/>
            <person name="Rosovitz M.J."/>
            <person name="Selengut J.D."/>
            <person name="Shrivastava S."/>
            <person name="Sullivan S.A."/>
            <person name="Tapia R."/>
            <person name="Thompson L.S."/>
            <person name="Watkins K.L."/>
            <person name="Yang Q."/>
            <person name="Yu C."/>
            <person name="Zafar N."/>
            <person name="Zhou L."/>
            <person name="Kuske C.R."/>
        </authorList>
    </citation>
    <scope>NUCLEOTIDE SEQUENCE [LARGE SCALE GENOMIC DNA]</scope>
    <source>
        <strain>ATCC 51196 / DSM 11244 / BCRC 80197 / JCM 7670 / NBRC 15755 / NCIMB 13165 / 161</strain>
    </source>
</reference>
<proteinExistence type="inferred from homology"/>
<comment type="function">
    <text evidence="1">This is one of the proteins that bind and probably mediate the attachment of the 5S RNA into the large ribosomal subunit, where it forms part of the central protuberance. In the 70S ribosome it contacts protein S13 of the 30S subunit (bridge B1b), connecting the 2 subunits; this bridge is implicated in subunit movement. Contacts the P site tRNA; the 5S rRNA and some of its associated proteins might help stabilize positioning of ribosome-bound tRNAs.</text>
</comment>
<comment type="subunit">
    <text evidence="1">Part of the 50S ribosomal subunit; part of the 5S rRNA/L5/L18/L25 subcomplex. Contacts the 5S rRNA and the P site tRNA. Forms a bridge to the 30S subunit in the 70S ribosome.</text>
</comment>
<comment type="similarity">
    <text evidence="1">Belongs to the universal ribosomal protein uL5 family.</text>
</comment>
<name>RL5_ACIC5</name>
<organism>
    <name type="scientific">Acidobacterium capsulatum (strain ATCC 51196 / DSM 11244 / BCRC 80197 / JCM 7670 / NBRC 15755 / NCIMB 13165 / 161)</name>
    <dbReference type="NCBI Taxonomy" id="240015"/>
    <lineage>
        <taxon>Bacteria</taxon>
        <taxon>Pseudomonadati</taxon>
        <taxon>Acidobacteriota</taxon>
        <taxon>Terriglobia</taxon>
        <taxon>Terriglobales</taxon>
        <taxon>Acidobacteriaceae</taxon>
        <taxon>Acidobacterium</taxon>
    </lineage>
</organism>
<protein>
    <recommendedName>
        <fullName evidence="1">Large ribosomal subunit protein uL5</fullName>
    </recommendedName>
    <alternativeName>
        <fullName evidence="2">50S ribosomal protein L5</fullName>
    </alternativeName>
</protein>